<evidence type="ECO:0000255" key="1"/>
<evidence type="ECO:0000256" key="2">
    <source>
        <dbReference type="SAM" id="MobiDB-lite"/>
    </source>
</evidence>
<evidence type="ECO:0000269" key="3">
    <source>
    </source>
</evidence>
<evidence type="ECO:0000269" key="4">
    <source>
    </source>
</evidence>
<evidence type="ECO:0000269" key="5">
    <source>
    </source>
</evidence>
<evidence type="ECO:0000269" key="6">
    <source>
    </source>
</evidence>
<evidence type="ECO:0000269" key="7">
    <source>
    </source>
</evidence>
<evidence type="ECO:0000303" key="8">
    <source>
    </source>
</evidence>
<evidence type="ECO:0000305" key="9"/>
<gene>
    <name type="primary">KANK4</name>
    <name type="synonym">ANKRD38</name>
</gene>
<accession>Q5T7N3</accession>
<accession>B1ALP7</accession>
<accession>Q6P9A0</accession>
<accession>Q86T71</accession>
<accession>Q86VE6</accession>
<accession>Q8NAX3</accession>
<proteinExistence type="evidence at protein level"/>
<comment type="function">
    <text evidence="6">May be involved in the control of cytoskeleton formation by regulating actin polymerization.</text>
</comment>
<comment type="interaction">
    <interactant intactId="EBI-9355810">
        <id>Q5T7N3</id>
    </interactant>
    <interactant intactId="EBI-1380630">
        <id>P41240</id>
        <label>CSK</label>
    </interactant>
    <organismsDiffer>false</organismsDiffer>
    <experiments>3</experiments>
</comment>
<comment type="interaction">
    <interactant intactId="EBI-9355810">
        <id>Q5T7N3</id>
    </interactant>
    <interactant intactId="EBI-1057139">
        <id>Q93034</id>
        <label>CUL5</label>
    </interactant>
    <organismsDiffer>false</organismsDiffer>
    <experiments>3</experiments>
</comment>
<comment type="interaction">
    <interactant intactId="EBI-9355810">
        <id>Q5T7N3</id>
    </interactant>
    <interactant intactId="EBI-2339359">
        <id>O14929</id>
        <label>HAT1</label>
    </interactant>
    <organismsDiffer>false</organismsDiffer>
    <experiments>3</experiments>
</comment>
<comment type="interaction">
    <interactant intactId="EBI-9355810">
        <id>Q5T7N3</id>
    </interactant>
    <interactant intactId="EBI-748420">
        <id>Q9NSC5</id>
        <label>HOMER3</label>
    </interactant>
    <organismsDiffer>false</organismsDiffer>
    <experiments>3</experiments>
</comment>
<comment type="interaction">
    <interactant intactId="EBI-9355810">
        <id>Q5T7N3</id>
    </interactant>
    <interactant intactId="EBI-6952711">
        <id>Q8WY64</id>
        <label>MYLIP</label>
    </interactant>
    <organismsDiffer>false</organismsDiffer>
    <experiments>3</experiments>
</comment>
<comment type="interaction">
    <interactant intactId="EBI-9355810">
        <id>Q5T7N3</id>
    </interactant>
    <interactant intactId="EBI-8451480">
        <id>O75865-2</id>
        <label>TRAPPC6A</label>
    </interactant>
    <organismsDiffer>false</organismsDiffer>
    <experiments>3</experiments>
</comment>
<comment type="subcellular location">
    <subcellularLocation>
        <location evidence="6 7">Cytoplasm</location>
    </subcellularLocation>
</comment>
<comment type="alternative products">
    <event type="alternative splicing"/>
    <isoform>
        <id>Q5T7N3-1</id>
        <name>1</name>
        <sequence type="displayed"/>
    </isoform>
    <isoform>
        <id>Q5T7N3-2</id>
        <name>2</name>
        <sequence type="described" ref="VSP_019552 VSP_019553"/>
    </isoform>
</comment>
<comment type="tissue specificity">
    <text evidence="6">Strongly expressed in colon, liver, lung, skeletal muscle and kidney.</text>
</comment>
<keyword id="KW-0025">Alternative splicing</keyword>
<keyword id="KW-0040">ANK repeat</keyword>
<keyword id="KW-0175">Coiled coil</keyword>
<keyword id="KW-0963">Cytoplasm</keyword>
<keyword id="KW-1267">Proteomics identification</keyword>
<keyword id="KW-1185">Reference proteome</keyword>
<keyword id="KW-0677">Repeat</keyword>
<protein>
    <recommendedName>
        <fullName>KN motif and ankyrin repeat domain-containing protein 4</fullName>
    </recommendedName>
    <alternativeName>
        <fullName>Ankyrin repeat domain-containing protein 38</fullName>
    </alternativeName>
</protein>
<sequence length="995" mass="107342">MEKTDAKDQSSQGDEEKDPPKSHPYSVETPYGFHLDLDFLKYVDDIEKGNTIKRIPIHRRAKQAKFSTLPRNFSLPDSGARPPAAPPLQNWSPVVPREASLGTQEQNQSPPLGNAPQASTSRSEVSYHRKALLAEATRQLEAAEPEDAELTFGSGRPQLLRASSMPATLLHSRASEEPGLSLGPPAPPALPPLQGEGSVCDGTFEPAEGLAGFHSSSPRASTRIPELVQEGAEPPEGVVKVPNHLPLPGPPFSFQNVLVVLEDKEDEHNAREAEVLFTPGSPTPSPPPLPSPIPENELLLEEIELNISEIPPPPPVEVDMRSIGIRVTEESLGLARVDPGSISSLKQQVSALEGELSGRTEELAQVRTALQQQEEEIKAREQRIRELEFTVAQLEGQFHQENAKDTQGQTDVMVNTDPVHGLLTRESCDKGIEVNLLGSMESESWGHRGEENGLLWGPDGHKQGNQSPAERVLLPQLSLPQGPEQVLTSSVHSFLSTELRIEEAGTEQEGGPQGGTRGAGGFLWGSDRKTPPAGREETSSNLPGKEHPGRPPSSPTDATIGQYVKKIQELLQEQWNCLEHGYPELASAIKQPASKLSSIQSQLLSSLNLLLSAYSAQAHPPKEPPASSSSPPVEISPSTSLKSIMKKKDYGFRAGGNGTKKNLQFVGVNGGYETTSSEETSGEDSTPEDLSDSEAEKKCDGPDHKHVKDAHLTCEAGQGIPEGTCHAAQESGPGEEVPHSKAERYKPSEEFLNACRALSQHLPETGTTTDQLLRQSLNTISQEWFRVSSRKSSSPAVVASYLHEVQPHSPHFLKLLVNLADHNGNTALHYSVSHSNFSIVKLLLETGVCNVDHQNKAGYTAVMITPLASAETNEDMAVVWKLLREGNVNIQATQGGQTALMLGVSHDREDMVQALLSCQADVNLQDHDGSSALMVACHHGNVDLVRLLLAHPACDSSLTDKAGRTALSIALKSPTHMEIAGLLRAHAEQGRSLGL</sequence>
<name>KANK4_HUMAN</name>
<organism>
    <name type="scientific">Homo sapiens</name>
    <name type="common">Human</name>
    <dbReference type="NCBI Taxonomy" id="9606"/>
    <lineage>
        <taxon>Eukaryota</taxon>
        <taxon>Metazoa</taxon>
        <taxon>Chordata</taxon>
        <taxon>Craniata</taxon>
        <taxon>Vertebrata</taxon>
        <taxon>Euteleostomi</taxon>
        <taxon>Mammalia</taxon>
        <taxon>Eutheria</taxon>
        <taxon>Euarchontoglires</taxon>
        <taxon>Primates</taxon>
        <taxon>Haplorrhini</taxon>
        <taxon>Catarrhini</taxon>
        <taxon>Hominidae</taxon>
        <taxon>Homo</taxon>
    </lineage>
</organism>
<reference key="1">
    <citation type="journal article" date="2004" name="Nat. Genet.">
        <title>Complete sequencing and characterization of 21,243 full-length human cDNAs.</title>
        <authorList>
            <person name="Ota T."/>
            <person name="Suzuki Y."/>
            <person name="Nishikawa T."/>
            <person name="Otsuki T."/>
            <person name="Sugiyama T."/>
            <person name="Irie R."/>
            <person name="Wakamatsu A."/>
            <person name="Hayashi K."/>
            <person name="Sato H."/>
            <person name="Nagai K."/>
            <person name="Kimura K."/>
            <person name="Makita H."/>
            <person name="Sekine M."/>
            <person name="Obayashi M."/>
            <person name="Nishi T."/>
            <person name="Shibahara T."/>
            <person name="Tanaka T."/>
            <person name="Ishii S."/>
            <person name="Yamamoto J."/>
            <person name="Saito K."/>
            <person name="Kawai Y."/>
            <person name="Isono Y."/>
            <person name="Nakamura Y."/>
            <person name="Nagahari K."/>
            <person name="Murakami K."/>
            <person name="Yasuda T."/>
            <person name="Iwayanagi T."/>
            <person name="Wagatsuma M."/>
            <person name="Shiratori A."/>
            <person name="Sudo H."/>
            <person name="Hosoiri T."/>
            <person name="Kaku Y."/>
            <person name="Kodaira H."/>
            <person name="Kondo H."/>
            <person name="Sugawara M."/>
            <person name="Takahashi M."/>
            <person name="Kanda K."/>
            <person name="Yokoi T."/>
            <person name="Furuya T."/>
            <person name="Kikkawa E."/>
            <person name="Omura Y."/>
            <person name="Abe K."/>
            <person name="Kamihara K."/>
            <person name="Katsuta N."/>
            <person name="Sato K."/>
            <person name="Tanikawa M."/>
            <person name="Yamazaki M."/>
            <person name="Ninomiya K."/>
            <person name="Ishibashi T."/>
            <person name="Yamashita H."/>
            <person name="Murakawa K."/>
            <person name="Fujimori K."/>
            <person name="Tanai H."/>
            <person name="Kimata M."/>
            <person name="Watanabe M."/>
            <person name="Hiraoka S."/>
            <person name="Chiba Y."/>
            <person name="Ishida S."/>
            <person name="Ono Y."/>
            <person name="Takiguchi S."/>
            <person name="Watanabe S."/>
            <person name="Yosida M."/>
            <person name="Hotuta T."/>
            <person name="Kusano J."/>
            <person name="Kanehori K."/>
            <person name="Takahashi-Fujii A."/>
            <person name="Hara H."/>
            <person name="Tanase T.-O."/>
            <person name="Nomura Y."/>
            <person name="Togiya S."/>
            <person name="Komai F."/>
            <person name="Hara R."/>
            <person name="Takeuchi K."/>
            <person name="Arita M."/>
            <person name="Imose N."/>
            <person name="Musashino K."/>
            <person name="Yuuki H."/>
            <person name="Oshima A."/>
            <person name="Sasaki N."/>
            <person name="Aotsuka S."/>
            <person name="Yoshikawa Y."/>
            <person name="Matsunawa H."/>
            <person name="Ichihara T."/>
            <person name="Shiohata N."/>
            <person name="Sano S."/>
            <person name="Moriya S."/>
            <person name="Momiyama H."/>
            <person name="Satoh N."/>
            <person name="Takami S."/>
            <person name="Terashima Y."/>
            <person name="Suzuki O."/>
            <person name="Nakagawa S."/>
            <person name="Senoh A."/>
            <person name="Mizoguchi H."/>
            <person name="Goto Y."/>
            <person name="Shimizu F."/>
            <person name="Wakebe H."/>
            <person name="Hishigaki H."/>
            <person name="Watanabe T."/>
            <person name="Sugiyama A."/>
            <person name="Takemoto M."/>
            <person name="Kawakami B."/>
            <person name="Yamazaki M."/>
            <person name="Watanabe K."/>
            <person name="Kumagai A."/>
            <person name="Itakura S."/>
            <person name="Fukuzumi Y."/>
            <person name="Fujimori Y."/>
            <person name="Komiyama M."/>
            <person name="Tashiro H."/>
            <person name="Tanigami A."/>
            <person name="Fujiwara T."/>
            <person name="Ono T."/>
            <person name="Yamada K."/>
            <person name="Fujii Y."/>
            <person name="Ozaki K."/>
            <person name="Hirao M."/>
            <person name="Ohmori Y."/>
            <person name="Kawabata A."/>
            <person name="Hikiji T."/>
            <person name="Kobatake N."/>
            <person name="Inagaki H."/>
            <person name="Ikema Y."/>
            <person name="Okamoto S."/>
            <person name="Okitani R."/>
            <person name="Kawakami T."/>
            <person name="Noguchi S."/>
            <person name="Itoh T."/>
            <person name="Shigeta K."/>
            <person name="Senba T."/>
            <person name="Matsumura K."/>
            <person name="Nakajima Y."/>
            <person name="Mizuno T."/>
            <person name="Morinaga M."/>
            <person name="Sasaki M."/>
            <person name="Togashi T."/>
            <person name="Oyama M."/>
            <person name="Hata H."/>
            <person name="Watanabe M."/>
            <person name="Komatsu T."/>
            <person name="Mizushima-Sugano J."/>
            <person name="Satoh T."/>
            <person name="Shirai Y."/>
            <person name="Takahashi Y."/>
            <person name="Nakagawa K."/>
            <person name="Okumura K."/>
            <person name="Nagase T."/>
            <person name="Nomura N."/>
            <person name="Kikuchi H."/>
            <person name="Masuho Y."/>
            <person name="Yamashita R."/>
            <person name="Nakai K."/>
            <person name="Yada T."/>
            <person name="Nakamura Y."/>
            <person name="Ohara O."/>
            <person name="Isogai T."/>
            <person name="Sugano S."/>
        </authorList>
    </citation>
    <scope>NUCLEOTIDE SEQUENCE [LARGE SCALE MRNA] (ISOFORM 2)</scope>
    <scope>VARIANTS ARG-822; ALA-840 AND LEU-935</scope>
    <source>
        <tissue>Kidney</tissue>
    </source>
</reference>
<reference key="2">
    <citation type="journal article" date="2006" name="Nature">
        <title>The DNA sequence and biological annotation of human chromosome 1.</title>
        <authorList>
            <person name="Gregory S.G."/>
            <person name="Barlow K.F."/>
            <person name="McLay K.E."/>
            <person name="Kaul R."/>
            <person name="Swarbreck D."/>
            <person name="Dunham A."/>
            <person name="Scott C.E."/>
            <person name="Howe K.L."/>
            <person name="Woodfine K."/>
            <person name="Spencer C.C.A."/>
            <person name="Jones M.C."/>
            <person name="Gillson C."/>
            <person name="Searle S."/>
            <person name="Zhou Y."/>
            <person name="Kokocinski F."/>
            <person name="McDonald L."/>
            <person name="Evans R."/>
            <person name="Phillips K."/>
            <person name="Atkinson A."/>
            <person name="Cooper R."/>
            <person name="Jones C."/>
            <person name="Hall R.E."/>
            <person name="Andrews T.D."/>
            <person name="Lloyd C."/>
            <person name="Ainscough R."/>
            <person name="Almeida J.P."/>
            <person name="Ambrose K.D."/>
            <person name="Anderson F."/>
            <person name="Andrew R.W."/>
            <person name="Ashwell R.I.S."/>
            <person name="Aubin K."/>
            <person name="Babbage A.K."/>
            <person name="Bagguley C.L."/>
            <person name="Bailey J."/>
            <person name="Beasley H."/>
            <person name="Bethel G."/>
            <person name="Bird C.P."/>
            <person name="Bray-Allen S."/>
            <person name="Brown J.Y."/>
            <person name="Brown A.J."/>
            <person name="Buckley D."/>
            <person name="Burton J."/>
            <person name="Bye J."/>
            <person name="Carder C."/>
            <person name="Chapman J.C."/>
            <person name="Clark S.Y."/>
            <person name="Clarke G."/>
            <person name="Clee C."/>
            <person name="Cobley V."/>
            <person name="Collier R.E."/>
            <person name="Corby N."/>
            <person name="Coville G.J."/>
            <person name="Davies J."/>
            <person name="Deadman R."/>
            <person name="Dunn M."/>
            <person name="Earthrowl M."/>
            <person name="Ellington A.G."/>
            <person name="Errington H."/>
            <person name="Frankish A."/>
            <person name="Frankland J."/>
            <person name="French L."/>
            <person name="Garner P."/>
            <person name="Garnett J."/>
            <person name="Gay L."/>
            <person name="Ghori M.R.J."/>
            <person name="Gibson R."/>
            <person name="Gilby L.M."/>
            <person name="Gillett W."/>
            <person name="Glithero R.J."/>
            <person name="Grafham D.V."/>
            <person name="Griffiths C."/>
            <person name="Griffiths-Jones S."/>
            <person name="Grocock R."/>
            <person name="Hammond S."/>
            <person name="Harrison E.S.I."/>
            <person name="Hart E."/>
            <person name="Haugen E."/>
            <person name="Heath P.D."/>
            <person name="Holmes S."/>
            <person name="Holt K."/>
            <person name="Howden P.J."/>
            <person name="Hunt A.R."/>
            <person name="Hunt S.E."/>
            <person name="Hunter G."/>
            <person name="Isherwood J."/>
            <person name="James R."/>
            <person name="Johnson C."/>
            <person name="Johnson D."/>
            <person name="Joy A."/>
            <person name="Kay M."/>
            <person name="Kershaw J.K."/>
            <person name="Kibukawa M."/>
            <person name="Kimberley A.M."/>
            <person name="King A."/>
            <person name="Knights A.J."/>
            <person name="Lad H."/>
            <person name="Laird G."/>
            <person name="Lawlor S."/>
            <person name="Leongamornlert D.A."/>
            <person name="Lloyd D.M."/>
            <person name="Loveland J."/>
            <person name="Lovell J."/>
            <person name="Lush M.J."/>
            <person name="Lyne R."/>
            <person name="Martin S."/>
            <person name="Mashreghi-Mohammadi M."/>
            <person name="Matthews L."/>
            <person name="Matthews N.S.W."/>
            <person name="McLaren S."/>
            <person name="Milne S."/>
            <person name="Mistry S."/>
            <person name="Moore M.J.F."/>
            <person name="Nickerson T."/>
            <person name="O'Dell C.N."/>
            <person name="Oliver K."/>
            <person name="Palmeiri A."/>
            <person name="Palmer S.A."/>
            <person name="Parker A."/>
            <person name="Patel D."/>
            <person name="Pearce A.V."/>
            <person name="Peck A.I."/>
            <person name="Pelan S."/>
            <person name="Phelps K."/>
            <person name="Phillimore B.J."/>
            <person name="Plumb R."/>
            <person name="Rajan J."/>
            <person name="Raymond C."/>
            <person name="Rouse G."/>
            <person name="Saenphimmachak C."/>
            <person name="Sehra H.K."/>
            <person name="Sheridan E."/>
            <person name="Shownkeen R."/>
            <person name="Sims S."/>
            <person name="Skuce C.D."/>
            <person name="Smith M."/>
            <person name="Steward C."/>
            <person name="Subramanian S."/>
            <person name="Sycamore N."/>
            <person name="Tracey A."/>
            <person name="Tromans A."/>
            <person name="Van Helmond Z."/>
            <person name="Wall M."/>
            <person name="Wallis J.M."/>
            <person name="White S."/>
            <person name="Whitehead S.L."/>
            <person name="Wilkinson J.E."/>
            <person name="Willey D.L."/>
            <person name="Williams H."/>
            <person name="Wilming L."/>
            <person name="Wray P.W."/>
            <person name="Wu Z."/>
            <person name="Coulson A."/>
            <person name="Vaudin M."/>
            <person name="Sulston J.E."/>
            <person name="Durbin R.M."/>
            <person name="Hubbard T."/>
            <person name="Wooster R."/>
            <person name="Dunham I."/>
            <person name="Carter N.P."/>
            <person name="McVean G."/>
            <person name="Ross M.T."/>
            <person name="Harrow J."/>
            <person name="Olson M.V."/>
            <person name="Beck S."/>
            <person name="Rogers J."/>
            <person name="Bentley D.R."/>
        </authorList>
    </citation>
    <scope>NUCLEOTIDE SEQUENCE [LARGE SCALE GENOMIC DNA]</scope>
</reference>
<reference key="3">
    <citation type="journal article" date="2004" name="Genome Res.">
        <title>The status, quality, and expansion of the NIH full-length cDNA project: the Mammalian Gene Collection (MGC).</title>
        <authorList>
            <consortium name="The MGC Project Team"/>
        </authorList>
    </citation>
    <scope>NUCLEOTIDE SEQUENCE [LARGE SCALE MRNA] (ISOFORM 1)</scope>
    <scope>VARIANTS ARG-822; ALA-840 AND LEU-935</scope>
    <source>
        <tissue>Placenta</tissue>
    </source>
</reference>
<reference key="4">
    <citation type="journal article" date="2007" name="BMC Genomics">
        <title>The full-ORF clone resource of the German cDNA consortium.</title>
        <authorList>
            <person name="Bechtel S."/>
            <person name="Rosenfelder H."/>
            <person name="Duda A."/>
            <person name="Schmidt C.P."/>
            <person name="Ernst U."/>
            <person name="Wellenreuther R."/>
            <person name="Mehrle A."/>
            <person name="Schuster C."/>
            <person name="Bahr A."/>
            <person name="Bloecker H."/>
            <person name="Heubner D."/>
            <person name="Hoerlein A."/>
            <person name="Michel G."/>
            <person name="Wedler H."/>
            <person name="Koehrer K."/>
            <person name="Ottenwaelder B."/>
            <person name="Poustka A."/>
            <person name="Wiemann S."/>
            <person name="Schupp I."/>
        </authorList>
    </citation>
    <scope>NUCLEOTIDE SEQUENCE [LARGE SCALE MRNA] OF 292-995</scope>
    <scope>VARIANTS ARG-822; ALA-840 AND LEU-935</scope>
    <source>
        <tissue>Spinal cord</tissue>
    </source>
</reference>
<reference key="5">
    <citation type="journal article" date="2008" name="Biochim. Biophys. Acta">
        <title>Kank proteins: a new family of ankyrin-repeat domain-containing proteins.</title>
        <authorList>
            <person name="Zhu Y."/>
            <person name="Kakinuma N."/>
            <person name="Wang Y."/>
            <person name="Kiyama R."/>
        </authorList>
    </citation>
    <scope>POSSIBLE FUNCTION</scope>
    <scope>SUBCELLULAR LOCATION</scope>
    <scope>TISSUE SPECIFICITY</scope>
</reference>
<reference key="6">
    <citation type="journal article" date="2015" name="J. Clin. Invest.">
        <title>KANK deficiency leads to podocyte dysfunction and nephrotic syndrome.</title>
        <authorList>
            <person name="Gee H.Y."/>
            <person name="Zhang F."/>
            <person name="Ashraf S."/>
            <person name="Kohl S."/>
            <person name="Sadowski C.E."/>
            <person name="Vega-Warner V."/>
            <person name="Zhou W."/>
            <person name="Lovric S."/>
            <person name="Fang H."/>
            <person name="Nettleton M."/>
            <person name="Zhu J.Y."/>
            <person name="Hoefele J."/>
            <person name="Weber L.T."/>
            <person name="Podracka L."/>
            <person name="Boor A."/>
            <person name="Fehrenbach H."/>
            <person name="Innis J.W."/>
            <person name="Washburn J."/>
            <person name="Levy S."/>
            <person name="Lifton R.P."/>
            <person name="Otto E.A."/>
            <person name="Han Z."/>
            <person name="Hildebrandt F."/>
        </authorList>
    </citation>
    <scope>SUBCELLULAR LOCATION</scope>
    <scope>VARIANT HIS-801</scope>
    <scope>CHARACTERIZATION OF VARIANT HIS-801</scope>
</reference>
<dbReference type="EMBL" id="AK091941">
    <property type="protein sequence ID" value="BAC03774.1"/>
    <property type="molecule type" value="mRNA"/>
</dbReference>
<dbReference type="EMBL" id="AL139343">
    <property type="status" value="NOT_ANNOTATED_CDS"/>
    <property type="molecule type" value="Genomic_DNA"/>
</dbReference>
<dbReference type="EMBL" id="AL162739">
    <property type="status" value="NOT_ANNOTATED_CDS"/>
    <property type="molecule type" value="Genomic_DNA"/>
</dbReference>
<dbReference type="EMBL" id="BC041418">
    <property type="protein sequence ID" value="AAH41418.1"/>
    <property type="molecule type" value="mRNA"/>
</dbReference>
<dbReference type="EMBL" id="BC060866">
    <property type="protein sequence ID" value="AAH60866.1"/>
    <property type="molecule type" value="mRNA"/>
</dbReference>
<dbReference type="EMBL" id="AL832644">
    <property type="protein sequence ID" value="CAD89966.1"/>
    <property type="molecule type" value="mRNA"/>
</dbReference>
<dbReference type="CCDS" id="CCDS620.1">
    <molecule id="Q5T7N3-1"/>
</dbReference>
<dbReference type="CCDS" id="CCDS81334.1">
    <molecule id="Q5T7N3-2"/>
</dbReference>
<dbReference type="RefSeq" id="NP_001307198.1">
    <molecule id="Q5T7N3-2"/>
    <property type="nucleotide sequence ID" value="NM_001320269.2"/>
</dbReference>
<dbReference type="RefSeq" id="NP_859063.3">
    <molecule id="Q5T7N3-1"/>
    <property type="nucleotide sequence ID" value="NM_181712.4"/>
</dbReference>
<dbReference type="RefSeq" id="XP_011539145.1">
    <property type="nucleotide sequence ID" value="XM_011540843.2"/>
</dbReference>
<dbReference type="RefSeq" id="XP_016855973.1">
    <molecule id="Q5T7N3-2"/>
    <property type="nucleotide sequence ID" value="XM_017000484.3"/>
</dbReference>
<dbReference type="RefSeq" id="XP_047303795.1">
    <molecule id="Q5T7N3-1"/>
    <property type="nucleotide sequence ID" value="XM_047447839.1"/>
</dbReference>
<dbReference type="RefSeq" id="XP_047303796.1">
    <molecule id="Q5T7N3-1"/>
    <property type="nucleotide sequence ID" value="XM_047447840.1"/>
</dbReference>
<dbReference type="RefSeq" id="XP_047303806.1">
    <molecule id="Q5T7N3-1"/>
    <property type="nucleotide sequence ID" value="XM_047447850.1"/>
</dbReference>
<dbReference type="SMR" id="Q5T7N3"/>
<dbReference type="BioGRID" id="127879">
    <property type="interactions" value="22"/>
</dbReference>
<dbReference type="FunCoup" id="Q5T7N3">
    <property type="interactions" value="362"/>
</dbReference>
<dbReference type="IntAct" id="Q5T7N3">
    <property type="interactions" value="20"/>
</dbReference>
<dbReference type="STRING" id="9606.ENSP00000360195"/>
<dbReference type="GlyGen" id="Q5T7N3">
    <property type="glycosylation" value="4 sites, 2 N-linked glycans (2 sites), 1 O-linked glycan (1 site)"/>
</dbReference>
<dbReference type="iPTMnet" id="Q5T7N3"/>
<dbReference type="PhosphoSitePlus" id="Q5T7N3"/>
<dbReference type="BioMuta" id="KANK4"/>
<dbReference type="DMDM" id="74745407"/>
<dbReference type="jPOST" id="Q5T7N3"/>
<dbReference type="MassIVE" id="Q5T7N3"/>
<dbReference type="PaxDb" id="9606-ENSP00000360195"/>
<dbReference type="PeptideAtlas" id="Q5T7N3"/>
<dbReference type="ProteomicsDB" id="64669">
    <molecule id="Q5T7N3-1"/>
</dbReference>
<dbReference type="ProteomicsDB" id="64670">
    <molecule id="Q5T7N3-2"/>
</dbReference>
<dbReference type="Pumba" id="Q5T7N3"/>
<dbReference type="Antibodypedia" id="2864">
    <property type="antibodies" value="25 antibodies from 13 providers"/>
</dbReference>
<dbReference type="DNASU" id="163782"/>
<dbReference type="Ensembl" id="ENST00000354381.3">
    <molecule id="Q5T7N3-2"/>
    <property type="protein sequence ID" value="ENSP00000346352.3"/>
    <property type="gene ID" value="ENSG00000132854.19"/>
</dbReference>
<dbReference type="Ensembl" id="ENST00000371153.9">
    <molecule id="Q5T7N3-1"/>
    <property type="protein sequence ID" value="ENSP00000360195.4"/>
    <property type="gene ID" value="ENSG00000132854.19"/>
</dbReference>
<dbReference type="GeneID" id="163782"/>
<dbReference type="KEGG" id="hsa:163782"/>
<dbReference type="MANE-Select" id="ENST00000371153.9">
    <property type="protein sequence ID" value="ENSP00000360195.4"/>
    <property type="RefSeq nucleotide sequence ID" value="NM_181712.5"/>
    <property type="RefSeq protein sequence ID" value="NP_859063.3"/>
</dbReference>
<dbReference type="UCSC" id="uc001dah.5">
    <molecule id="Q5T7N3-1"/>
    <property type="organism name" value="human"/>
</dbReference>
<dbReference type="AGR" id="HGNC:27263"/>
<dbReference type="CTD" id="163782"/>
<dbReference type="DisGeNET" id="163782"/>
<dbReference type="GeneCards" id="KANK4"/>
<dbReference type="HGNC" id="HGNC:27263">
    <property type="gene designation" value="KANK4"/>
</dbReference>
<dbReference type="HPA" id="ENSG00000132854">
    <property type="expression patterns" value="Tissue enhanced (adipose tissue, brain, pancreas, placenta)"/>
</dbReference>
<dbReference type="MalaCards" id="KANK4"/>
<dbReference type="MIM" id="614612">
    <property type="type" value="gene"/>
</dbReference>
<dbReference type="neXtProt" id="NX_Q5T7N3"/>
<dbReference type="OpenTargets" id="ENSG00000132854"/>
<dbReference type="PharmGKB" id="PA162392639"/>
<dbReference type="VEuPathDB" id="HostDB:ENSG00000132854"/>
<dbReference type="eggNOG" id="KOG0514">
    <property type="taxonomic scope" value="Eukaryota"/>
</dbReference>
<dbReference type="GeneTree" id="ENSGT00940000158468"/>
<dbReference type="HOGENOM" id="CLU_004269_0_0_1"/>
<dbReference type="InParanoid" id="Q5T7N3"/>
<dbReference type="OMA" id="QSCQGDE"/>
<dbReference type="OrthoDB" id="5406014at2759"/>
<dbReference type="PAN-GO" id="Q5T7N3">
    <property type="GO annotations" value="3 GO annotations based on evolutionary models"/>
</dbReference>
<dbReference type="PhylomeDB" id="Q5T7N3"/>
<dbReference type="TreeFam" id="TF324499"/>
<dbReference type="PathwayCommons" id="Q5T7N3"/>
<dbReference type="SignaLink" id="Q5T7N3"/>
<dbReference type="BioGRID-ORCS" id="163782">
    <property type="hits" value="11 hits in 1138 CRISPR screens"/>
</dbReference>
<dbReference type="ChiTaRS" id="KANK4">
    <property type="organism name" value="human"/>
</dbReference>
<dbReference type="GenomeRNAi" id="163782"/>
<dbReference type="Pharos" id="Q5T7N3">
    <property type="development level" value="Tdark"/>
</dbReference>
<dbReference type="PRO" id="PR:Q5T7N3"/>
<dbReference type="Proteomes" id="UP000005640">
    <property type="component" value="Chromosome 1"/>
</dbReference>
<dbReference type="RNAct" id="Q5T7N3">
    <property type="molecule type" value="protein"/>
</dbReference>
<dbReference type="Bgee" id="ENSG00000132854">
    <property type="expression patterns" value="Expressed in trigeminal ganglion and 152 other cell types or tissues"/>
</dbReference>
<dbReference type="ExpressionAtlas" id="Q5T7N3">
    <property type="expression patterns" value="baseline and differential"/>
</dbReference>
<dbReference type="GO" id="GO:0005737">
    <property type="term" value="C:cytoplasm"/>
    <property type="evidence" value="ECO:0000314"/>
    <property type="project" value="UniProtKB"/>
</dbReference>
<dbReference type="GO" id="GO:0005856">
    <property type="term" value="C:cytoskeleton"/>
    <property type="evidence" value="ECO:0000318"/>
    <property type="project" value="GO_Central"/>
</dbReference>
<dbReference type="GO" id="GO:0005829">
    <property type="term" value="C:cytosol"/>
    <property type="evidence" value="ECO:0000314"/>
    <property type="project" value="HPA"/>
</dbReference>
<dbReference type="GO" id="GO:0015630">
    <property type="term" value="C:microtubule cytoskeleton"/>
    <property type="evidence" value="ECO:0000314"/>
    <property type="project" value="HPA"/>
</dbReference>
<dbReference type="GO" id="GO:0030837">
    <property type="term" value="P:negative regulation of actin filament polymerization"/>
    <property type="evidence" value="ECO:0000318"/>
    <property type="project" value="GO_Central"/>
</dbReference>
<dbReference type="FunFam" id="1.25.40.20:FF:000135">
    <property type="entry name" value="KN motif and ankyrin repeat domains 4"/>
    <property type="match status" value="1"/>
</dbReference>
<dbReference type="Gene3D" id="1.25.40.20">
    <property type="entry name" value="Ankyrin repeat-containing domain"/>
    <property type="match status" value="1"/>
</dbReference>
<dbReference type="InterPro" id="IPR002110">
    <property type="entry name" value="Ankyrin_rpt"/>
</dbReference>
<dbReference type="InterPro" id="IPR036770">
    <property type="entry name" value="Ankyrin_rpt-contain_sf"/>
</dbReference>
<dbReference type="InterPro" id="IPR047184">
    <property type="entry name" value="KANK1-4"/>
</dbReference>
<dbReference type="InterPro" id="IPR021939">
    <property type="entry name" value="KN_motif"/>
</dbReference>
<dbReference type="PANTHER" id="PTHR24168">
    <property type="entry name" value="KN MOTIF AND ANKYRIN REPEAT DOMAIN-CONTAINING"/>
    <property type="match status" value="1"/>
</dbReference>
<dbReference type="PANTHER" id="PTHR24168:SF24">
    <property type="entry name" value="KN MOTIF AND ANKYRIN REPEAT DOMAIN-CONTAINING PROTEIN 4"/>
    <property type="match status" value="1"/>
</dbReference>
<dbReference type="Pfam" id="PF12796">
    <property type="entry name" value="Ank_2"/>
    <property type="match status" value="2"/>
</dbReference>
<dbReference type="Pfam" id="PF12075">
    <property type="entry name" value="KN_motif"/>
    <property type="match status" value="1"/>
</dbReference>
<dbReference type="SMART" id="SM00248">
    <property type="entry name" value="ANK"/>
    <property type="match status" value="4"/>
</dbReference>
<dbReference type="SUPFAM" id="SSF48403">
    <property type="entry name" value="Ankyrin repeat"/>
    <property type="match status" value="1"/>
</dbReference>
<dbReference type="PROSITE" id="PS50297">
    <property type="entry name" value="ANK_REP_REGION"/>
    <property type="match status" value="1"/>
</dbReference>
<dbReference type="PROSITE" id="PS50088">
    <property type="entry name" value="ANK_REPEAT"/>
    <property type="match status" value="3"/>
</dbReference>
<feature type="chain" id="PRO_0000244364" description="KN motif and ankyrin repeat domain-containing protein 4">
    <location>
        <begin position="1"/>
        <end position="995"/>
    </location>
</feature>
<feature type="repeat" description="ANK 1">
    <location>
        <begin position="823"/>
        <end position="853"/>
    </location>
</feature>
<feature type="repeat" description="ANK 2">
    <location>
        <begin position="862"/>
        <end position="890"/>
    </location>
</feature>
<feature type="repeat" description="ANK 3">
    <location>
        <begin position="895"/>
        <end position="924"/>
    </location>
</feature>
<feature type="repeat" description="ANK 4">
    <location>
        <begin position="928"/>
        <end position="958"/>
    </location>
</feature>
<feature type="repeat" description="ANK 5">
    <location>
        <begin position="962"/>
        <end position="992"/>
    </location>
</feature>
<feature type="region of interest" description="Disordered" evidence="2">
    <location>
        <begin position="1"/>
        <end position="29"/>
    </location>
</feature>
<feature type="region of interest" description="Disordered" evidence="2">
    <location>
        <begin position="68"/>
        <end position="127"/>
    </location>
</feature>
<feature type="region of interest" description="Disordered" evidence="2">
    <location>
        <begin position="443"/>
        <end position="467"/>
    </location>
</feature>
<feature type="region of interest" description="Disordered" evidence="2">
    <location>
        <begin position="503"/>
        <end position="558"/>
    </location>
</feature>
<feature type="region of interest" description="Disordered" evidence="2">
    <location>
        <begin position="617"/>
        <end position="642"/>
    </location>
</feature>
<feature type="region of interest" description="Disordered" evidence="2">
    <location>
        <begin position="663"/>
        <end position="705"/>
    </location>
</feature>
<feature type="region of interest" description="Disordered" evidence="2">
    <location>
        <begin position="721"/>
        <end position="740"/>
    </location>
</feature>
<feature type="coiled-coil region" evidence="1">
    <location>
        <begin position="343"/>
        <end position="404"/>
    </location>
</feature>
<feature type="compositionally biased region" description="Polar residues" evidence="2">
    <location>
        <begin position="101"/>
        <end position="124"/>
    </location>
</feature>
<feature type="compositionally biased region" description="Gly residues" evidence="2">
    <location>
        <begin position="511"/>
        <end position="523"/>
    </location>
</feature>
<feature type="compositionally biased region" description="Basic and acidic residues" evidence="2">
    <location>
        <begin position="526"/>
        <end position="549"/>
    </location>
</feature>
<feature type="compositionally biased region" description="Low complexity" evidence="2">
    <location>
        <begin position="625"/>
        <end position="640"/>
    </location>
</feature>
<feature type="compositionally biased region" description="Acidic residues" evidence="2">
    <location>
        <begin position="680"/>
        <end position="693"/>
    </location>
</feature>
<feature type="compositionally biased region" description="Basic and acidic residues" evidence="2">
    <location>
        <begin position="694"/>
        <end position="705"/>
    </location>
</feature>
<feature type="splice variant" id="VSP_019552" description="In isoform 2." evidence="8">
    <location>
        <begin position="1"/>
        <end position="628"/>
    </location>
</feature>
<feature type="splice variant" id="VSP_019553" description="In isoform 2." evidence="8">
    <original>SSPPV</original>
    <variation>MEKTD</variation>
    <location>
        <begin position="629"/>
        <end position="633"/>
    </location>
</feature>
<feature type="sequence variant" id="VAR_048306" description="In dbSNP:rs17123306.">
    <original>G</original>
    <variation>S</variation>
    <location>
        <position position="701"/>
    </location>
</feature>
<feature type="sequence variant" id="VAR_048307" description="In dbSNP:rs11207949.">
    <original>T</original>
    <variation>A</variation>
    <location>
        <position position="768"/>
    </location>
</feature>
<feature type="sequence variant" id="VAR_080961" description="Found in a patient with nephrotic syndrome; uncertain significance; no effect on protein localization; dbSNP:rs145623004." evidence="7">
    <original>Y</original>
    <variation>H</variation>
    <location>
        <position position="801"/>
    </location>
</feature>
<feature type="sequence variant" id="VAR_026902" description="In dbSNP:rs2258470." evidence="3 4 5">
    <original>H</original>
    <variation>R</variation>
    <location>
        <position position="822"/>
    </location>
</feature>
<feature type="sequence variant" id="VAR_026903" description="In dbSNP:rs2666472." evidence="3 4 5">
    <original>V</original>
    <variation>A</variation>
    <location>
        <position position="840"/>
    </location>
</feature>
<feature type="sequence variant" id="VAR_026904" description="In dbSNP:rs2941679." evidence="3 4 5">
    <original>V</original>
    <variation>L</variation>
    <location>
        <position position="935"/>
    </location>
</feature>
<feature type="sequence variant" id="VAR_048308" description="In dbSNP:rs34591898.">
    <original>A</original>
    <variation>V</variation>
    <location>
        <position position="987"/>
    </location>
</feature>
<feature type="sequence conflict" description="In Ref. 4; CAD89966." evidence="9" ref="4">
    <original>E</original>
    <variation>G</variation>
    <location>
        <position position="297"/>
    </location>
</feature>
<feature type="sequence conflict" description="In Ref. 1; BAC03774." evidence="9" ref="1">
    <original>R</original>
    <variation>H</variation>
    <location>
        <position position="786"/>
    </location>
</feature>